<feature type="chain" id="PRO_0000071131" description="DnaJ-related protein rsp1">
    <location>
        <begin position="1"/>
        <end position="494"/>
    </location>
</feature>
<feature type="domain" description="J" evidence="1">
    <location>
        <begin position="12"/>
        <end position="78"/>
    </location>
</feature>
<feature type="region of interest" description="Disordered" evidence="2">
    <location>
        <begin position="229"/>
        <end position="354"/>
    </location>
</feature>
<feature type="compositionally biased region" description="Polar residues" evidence="2">
    <location>
        <begin position="229"/>
        <end position="242"/>
    </location>
</feature>
<feature type="compositionally biased region" description="Low complexity" evidence="2">
    <location>
        <begin position="243"/>
        <end position="256"/>
    </location>
</feature>
<feature type="compositionally biased region" description="Polar residues" evidence="2">
    <location>
        <begin position="270"/>
        <end position="287"/>
    </location>
</feature>
<feature type="compositionally biased region" description="Low complexity" evidence="2">
    <location>
        <begin position="321"/>
        <end position="331"/>
    </location>
</feature>
<feature type="compositionally biased region" description="Polar residues" evidence="2">
    <location>
        <begin position="332"/>
        <end position="354"/>
    </location>
</feature>
<comment type="function">
    <text evidence="3">Has a role in the proper organization of the interphase microtubule cytoskeleton. Required for equatorial microtubule organizing center (eMTOC) disassembly into satellites, contributing to the dynamic redistribution of MTOC components for organization of interphase microtubules.</text>
</comment>
<comment type="subunit">
    <text evidence="3">Interacts iwth ssa1.</text>
</comment>
<comment type="subcellular location">
    <subcellularLocation>
        <location evidence="3">Cytoplasm</location>
        <location evidence="3">Cytoskeleton</location>
    </subcellularLocation>
    <subcellularLocation>
        <location evidence="3">Nucleus</location>
    </subcellularLocation>
    <text>Associates with the microtubule bundles.</text>
</comment>
<keyword id="KW-0143">Chaperone</keyword>
<keyword id="KW-0963">Cytoplasm</keyword>
<keyword id="KW-0206">Cytoskeleton</keyword>
<keyword id="KW-0493">Microtubule</keyword>
<keyword id="KW-0539">Nucleus</keyword>
<keyword id="KW-1185">Reference proteome</keyword>
<sequence length="494" mass="56289">MARTAFHDEFVDYYTILGAESTSSYVEIRQQYLKLVLRYHPDRNPGREAEVLPQFQLIQKAHEVLKDPKLRELFDQRRLLEAGRPDGVLRFRPKKSGPKNDISTKVASKVSVTMATKFAEKKKKQDRENVDSKDNNITNFSLHRSFSASGKMEKNNSFKEVSTSKSYISSGYLHPKTSPIFKKNGYATENVVDPISSSPRFKGPNYNKFNAKLYLESLREKRRTYTPLSEISNGLNSNGVENSSITKSSPRSSSSSNNERFKDTSEESIIFTSPNTPEHPSVYQTDITPEIKLEHSDNNSPSKPEIPFRHPTSKPLPPKPLSRSKSSSLSRNQTRSQLNDLSAENDSTSNSTEYDDQLQSILRSLAIEGDDDEVAKVLPKPPSVPTIQAPIPPEAPRNLTNASVDSYLNSFEMYQRRWSSYSIIYTQYAFQWQIFKNKCFQLDLMNTPGQSRLIDNWKEGSQAIQLFYAYEQMHLRALEELQSLKESLFASFGI</sequence>
<proteinExistence type="evidence at protein level"/>
<evidence type="ECO:0000255" key="1">
    <source>
        <dbReference type="PROSITE-ProRule" id="PRU00286"/>
    </source>
</evidence>
<evidence type="ECO:0000256" key="2">
    <source>
        <dbReference type="SAM" id="MobiDB-lite"/>
    </source>
</evidence>
<evidence type="ECO:0000269" key="3">
    <source>
    </source>
</evidence>
<gene>
    <name type="primary">rsp1</name>
    <name type="ORF">pi006</name>
    <name type="ORF">SPBC11B10.05c</name>
</gene>
<name>RSP1_SCHPO</name>
<accession>O13601</accession>
<organism>
    <name type="scientific">Schizosaccharomyces pombe (strain 972 / ATCC 24843)</name>
    <name type="common">Fission yeast</name>
    <dbReference type="NCBI Taxonomy" id="284812"/>
    <lineage>
        <taxon>Eukaryota</taxon>
        <taxon>Fungi</taxon>
        <taxon>Dikarya</taxon>
        <taxon>Ascomycota</taxon>
        <taxon>Taphrinomycotina</taxon>
        <taxon>Schizosaccharomycetes</taxon>
        <taxon>Schizosaccharomycetales</taxon>
        <taxon>Schizosaccharomycetaceae</taxon>
        <taxon>Schizosaccharomyces</taxon>
    </lineage>
</organism>
<reference key="1">
    <citation type="journal article" date="2000" name="Yeast">
        <title>A 38 kb segment containing the cdc2 gene from the left arm of fission yeast chromosome II: sequence analysis and characterization of the genomic DNA and cDNAs encoded on the segment.</title>
        <authorList>
            <person name="Machida M."/>
            <person name="Yamazaki S."/>
            <person name="Kunihiro S."/>
            <person name="Tanaka T."/>
            <person name="Kushida N."/>
            <person name="Jinno K."/>
            <person name="Haikawa Y."/>
            <person name="Yamazaki J."/>
            <person name="Yamamoto S."/>
            <person name="Sekine M."/>
            <person name="Oguchi A."/>
            <person name="Nagai Y."/>
            <person name="Sakai M."/>
            <person name="Aoki K."/>
            <person name="Ogura K."/>
            <person name="Kudoh Y."/>
            <person name="Kikuchi H."/>
            <person name="Zhang M.Q."/>
            <person name="Yanagida M."/>
        </authorList>
    </citation>
    <scope>NUCLEOTIDE SEQUENCE [LARGE SCALE GENOMIC DNA]</scope>
    <source>
        <strain>972 / ATCC 24843</strain>
    </source>
</reference>
<reference key="2">
    <citation type="journal article" date="2002" name="Nature">
        <title>The genome sequence of Schizosaccharomyces pombe.</title>
        <authorList>
            <person name="Wood V."/>
            <person name="Gwilliam R."/>
            <person name="Rajandream M.A."/>
            <person name="Lyne M.H."/>
            <person name="Lyne R."/>
            <person name="Stewart A."/>
            <person name="Sgouros J.G."/>
            <person name="Peat N."/>
            <person name="Hayles J."/>
            <person name="Baker S.G."/>
            <person name="Basham D."/>
            <person name="Bowman S."/>
            <person name="Brooks K."/>
            <person name="Brown D."/>
            <person name="Brown S."/>
            <person name="Chillingworth T."/>
            <person name="Churcher C.M."/>
            <person name="Collins M."/>
            <person name="Connor R."/>
            <person name="Cronin A."/>
            <person name="Davis P."/>
            <person name="Feltwell T."/>
            <person name="Fraser A."/>
            <person name="Gentles S."/>
            <person name="Goble A."/>
            <person name="Hamlin N."/>
            <person name="Harris D.E."/>
            <person name="Hidalgo J."/>
            <person name="Hodgson G."/>
            <person name="Holroyd S."/>
            <person name="Hornsby T."/>
            <person name="Howarth S."/>
            <person name="Huckle E.J."/>
            <person name="Hunt S."/>
            <person name="Jagels K."/>
            <person name="James K.D."/>
            <person name="Jones L."/>
            <person name="Jones M."/>
            <person name="Leather S."/>
            <person name="McDonald S."/>
            <person name="McLean J."/>
            <person name="Mooney P."/>
            <person name="Moule S."/>
            <person name="Mungall K.L."/>
            <person name="Murphy L.D."/>
            <person name="Niblett D."/>
            <person name="Odell C."/>
            <person name="Oliver K."/>
            <person name="O'Neil S."/>
            <person name="Pearson D."/>
            <person name="Quail M.A."/>
            <person name="Rabbinowitsch E."/>
            <person name="Rutherford K.M."/>
            <person name="Rutter S."/>
            <person name="Saunders D."/>
            <person name="Seeger K."/>
            <person name="Sharp S."/>
            <person name="Skelton J."/>
            <person name="Simmonds M.N."/>
            <person name="Squares R."/>
            <person name="Squares S."/>
            <person name="Stevens K."/>
            <person name="Taylor K."/>
            <person name="Taylor R.G."/>
            <person name="Tivey A."/>
            <person name="Walsh S.V."/>
            <person name="Warren T."/>
            <person name="Whitehead S."/>
            <person name="Woodward J.R."/>
            <person name="Volckaert G."/>
            <person name="Aert R."/>
            <person name="Robben J."/>
            <person name="Grymonprez B."/>
            <person name="Weltjens I."/>
            <person name="Vanstreels E."/>
            <person name="Rieger M."/>
            <person name="Schaefer M."/>
            <person name="Mueller-Auer S."/>
            <person name="Gabel C."/>
            <person name="Fuchs M."/>
            <person name="Duesterhoeft A."/>
            <person name="Fritzc C."/>
            <person name="Holzer E."/>
            <person name="Moestl D."/>
            <person name="Hilbert H."/>
            <person name="Borzym K."/>
            <person name="Langer I."/>
            <person name="Beck A."/>
            <person name="Lehrach H."/>
            <person name="Reinhardt R."/>
            <person name="Pohl T.M."/>
            <person name="Eger P."/>
            <person name="Zimmermann W."/>
            <person name="Wedler H."/>
            <person name="Wambutt R."/>
            <person name="Purnelle B."/>
            <person name="Goffeau A."/>
            <person name="Cadieu E."/>
            <person name="Dreano S."/>
            <person name="Gloux S."/>
            <person name="Lelaure V."/>
            <person name="Mottier S."/>
            <person name="Galibert F."/>
            <person name="Aves S.J."/>
            <person name="Xiang Z."/>
            <person name="Hunt C."/>
            <person name="Moore K."/>
            <person name="Hurst S.M."/>
            <person name="Lucas M."/>
            <person name="Rochet M."/>
            <person name="Gaillardin C."/>
            <person name="Tallada V.A."/>
            <person name="Garzon A."/>
            <person name="Thode G."/>
            <person name="Daga R.R."/>
            <person name="Cruzado L."/>
            <person name="Jimenez J."/>
            <person name="Sanchez M."/>
            <person name="del Rey F."/>
            <person name="Benito J."/>
            <person name="Dominguez A."/>
            <person name="Revuelta J.L."/>
            <person name="Moreno S."/>
            <person name="Armstrong J."/>
            <person name="Forsburg S.L."/>
            <person name="Cerutti L."/>
            <person name="Lowe T."/>
            <person name="McCombie W.R."/>
            <person name="Paulsen I."/>
            <person name="Potashkin J."/>
            <person name="Shpakovski G.V."/>
            <person name="Ussery D."/>
            <person name="Barrell B.G."/>
            <person name="Nurse P."/>
        </authorList>
    </citation>
    <scope>NUCLEOTIDE SEQUENCE [LARGE SCALE GENOMIC DNA]</scope>
    <source>
        <strain>972 / ATCC 24843</strain>
    </source>
</reference>
<reference key="3">
    <citation type="journal article" date="2004" name="Dev. Cell">
        <title>Rsp1p, a J domain protein required for disassembly and assembly of microtubule organizing centers during the fission yeast cell cycle.</title>
        <authorList>
            <person name="Zimmerman S."/>
            <person name="Tran P.T."/>
            <person name="Daga R.R."/>
            <person name="Niwa O."/>
            <person name="Chang F."/>
        </authorList>
    </citation>
    <scope>FUNCTION</scope>
    <scope>INTERACTION WITH SSA1</scope>
    <scope>SUBCELLULAR LOCATION</scope>
</reference>
<dbReference type="EMBL" id="AB004534">
    <property type="protein sequence ID" value="BAA21383.1"/>
    <property type="molecule type" value="Genomic_DNA"/>
</dbReference>
<dbReference type="EMBL" id="CU329671">
    <property type="protein sequence ID" value="CAC37509.1"/>
    <property type="molecule type" value="Genomic_DNA"/>
</dbReference>
<dbReference type="RefSeq" id="NP_595625.1">
    <property type="nucleotide sequence ID" value="NM_001021519.2"/>
</dbReference>
<dbReference type="BioGRID" id="276495">
    <property type="interactions" value="8"/>
</dbReference>
<dbReference type="FunCoup" id="O13601">
    <property type="interactions" value="420"/>
</dbReference>
<dbReference type="STRING" id="284812.O13601"/>
<dbReference type="iPTMnet" id="O13601"/>
<dbReference type="PaxDb" id="4896-SPBC11B10.05c.1"/>
<dbReference type="EnsemblFungi" id="SPBC11B10.05c.1">
    <property type="protein sequence ID" value="SPBC11B10.05c.1:pep"/>
    <property type="gene ID" value="SPBC11B10.05c"/>
</dbReference>
<dbReference type="GeneID" id="2539951"/>
<dbReference type="KEGG" id="spo:2539951"/>
<dbReference type="PomBase" id="SPBC11B10.05c">
    <property type="gene designation" value="rsp1"/>
</dbReference>
<dbReference type="VEuPathDB" id="FungiDB:SPBC11B10.05c"/>
<dbReference type="eggNOG" id="KOG0714">
    <property type="taxonomic scope" value="Eukaryota"/>
</dbReference>
<dbReference type="HOGENOM" id="CLU_570058_0_0_1"/>
<dbReference type="InParanoid" id="O13601"/>
<dbReference type="OMA" id="QDVIPHF"/>
<dbReference type="CD-CODE" id="576F0A76">
    <property type="entry name" value="Centrosome"/>
</dbReference>
<dbReference type="PRO" id="PR:O13601"/>
<dbReference type="Proteomes" id="UP000002485">
    <property type="component" value="Chromosome II"/>
</dbReference>
<dbReference type="GO" id="GO:0032153">
    <property type="term" value="C:cell division site"/>
    <property type="evidence" value="ECO:0007005"/>
    <property type="project" value="PomBase"/>
</dbReference>
<dbReference type="GO" id="GO:0005737">
    <property type="term" value="C:cytoplasm"/>
    <property type="evidence" value="ECO:0007005"/>
    <property type="project" value="PomBase"/>
</dbReference>
<dbReference type="GO" id="GO:1904511">
    <property type="term" value="C:cytoplasmic microtubule plus-end"/>
    <property type="evidence" value="ECO:0000314"/>
    <property type="project" value="PomBase"/>
</dbReference>
<dbReference type="GO" id="GO:0000923">
    <property type="term" value="C:equatorial microtubule organizing center"/>
    <property type="evidence" value="ECO:0000314"/>
    <property type="project" value="PomBase"/>
</dbReference>
<dbReference type="GO" id="GO:0031021">
    <property type="term" value="C:interphase microtubule organizing center"/>
    <property type="evidence" value="ECO:0000314"/>
    <property type="project" value="PomBase"/>
</dbReference>
<dbReference type="GO" id="GO:0044732">
    <property type="term" value="C:mitotic spindle pole body"/>
    <property type="evidence" value="ECO:0000314"/>
    <property type="project" value="PomBase"/>
</dbReference>
<dbReference type="GO" id="GO:0005634">
    <property type="term" value="C:nucleus"/>
    <property type="evidence" value="ECO:0007669"/>
    <property type="project" value="UniProtKB-SubCell"/>
</dbReference>
<dbReference type="GO" id="GO:0005816">
    <property type="term" value="C:spindle pole body"/>
    <property type="evidence" value="ECO:0000314"/>
    <property type="project" value="PomBase"/>
</dbReference>
<dbReference type="GO" id="GO:0030544">
    <property type="term" value="F:Hsp70 protein binding"/>
    <property type="evidence" value="ECO:0000353"/>
    <property type="project" value="PomBase"/>
</dbReference>
<dbReference type="GO" id="GO:0051082">
    <property type="term" value="F:unfolded protein binding"/>
    <property type="evidence" value="ECO:0000318"/>
    <property type="project" value="GO_Central"/>
</dbReference>
<dbReference type="GO" id="GO:0051085">
    <property type="term" value="P:chaperone cofactor-dependent protein refolding"/>
    <property type="evidence" value="ECO:0000318"/>
    <property type="project" value="GO_Central"/>
</dbReference>
<dbReference type="GO" id="GO:0031122">
    <property type="term" value="P:cytoplasmic microtubule organization"/>
    <property type="evidence" value="ECO:0000269"/>
    <property type="project" value="PomBase"/>
</dbReference>
<dbReference type="GO" id="GO:0031025">
    <property type="term" value="P:equatorial microtubule organizing center disassembly"/>
    <property type="evidence" value="ECO:0000315"/>
    <property type="project" value="PomBase"/>
</dbReference>
<dbReference type="GO" id="GO:0031024">
    <property type="term" value="P:interphase microtubule organizing center assembly"/>
    <property type="evidence" value="ECO:0000315"/>
    <property type="project" value="PomBase"/>
</dbReference>
<dbReference type="GO" id="GO:0042026">
    <property type="term" value="P:protein refolding"/>
    <property type="evidence" value="ECO:0000318"/>
    <property type="project" value="GO_Central"/>
</dbReference>
<dbReference type="CDD" id="cd06257">
    <property type="entry name" value="DnaJ"/>
    <property type="match status" value="1"/>
</dbReference>
<dbReference type="Gene3D" id="1.10.287.110">
    <property type="entry name" value="DnaJ domain"/>
    <property type="match status" value="1"/>
</dbReference>
<dbReference type="InterPro" id="IPR051964">
    <property type="entry name" value="Chaperone_stress_response"/>
</dbReference>
<dbReference type="InterPro" id="IPR001623">
    <property type="entry name" value="DnaJ_domain"/>
</dbReference>
<dbReference type="InterPro" id="IPR018253">
    <property type="entry name" value="DnaJ_domain_CS"/>
</dbReference>
<dbReference type="InterPro" id="IPR036869">
    <property type="entry name" value="J_dom_sf"/>
</dbReference>
<dbReference type="PANTHER" id="PTHR44029">
    <property type="entry name" value="DNAJ HOMOLOG SUBFAMILY C MEMBER 21"/>
    <property type="match status" value="1"/>
</dbReference>
<dbReference type="PANTHER" id="PTHR44029:SF1">
    <property type="entry name" value="DNAJ HOMOLOG SUBFAMILY C MEMBER 21"/>
    <property type="match status" value="1"/>
</dbReference>
<dbReference type="Pfam" id="PF00226">
    <property type="entry name" value="DnaJ"/>
    <property type="match status" value="1"/>
</dbReference>
<dbReference type="PRINTS" id="PR00625">
    <property type="entry name" value="JDOMAIN"/>
</dbReference>
<dbReference type="SMART" id="SM00271">
    <property type="entry name" value="DnaJ"/>
    <property type="match status" value="1"/>
</dbReference>
<dbReference type="SUPFAM" id="SSF46565">
    <property type="entry name" value="Chaperone J-domain"/>
    <property type="match status" value="1"/>
</dbReference>
<dbReference type="PROSITE" id="PS00636">
    <property type="entry name" value="DNAJ_1"/>
    <property type="match status" value="1"/>
</dbReference>
<dbReference type="PROSITE" id="PS50076">
    <property type="entry name" value="DNAJ_2"/>
    <property type="match status" value="1"/>
</dbReference>
<protein>
    <recommendedName>
        <fullName>DnaJ-related protein rsp1</fullName>
    </recommendedName>
</protein>